<sequence>MSAFKKSGSKSETSKKLVVVGDGGCGKTCLLIVFSSGTFPERYVPTVFENYITDITYGPNSKVIELALWDTAGQEEYDRLRPLSYPNSNVILLCFSIDCPASLNNVTEKWYPEVQHFCPRTPIVLVGLKADLRKDRNATEVLRTQGLTPVTYQQAQSVALSMNAPYVECSAKENTGVNEVFQLAVGLTIKKSFSFSKKSCVIL</sequence>
<accession>Q874R1</accession>
<evidence type="ECO:0000250" key="1"/>
<evidence type="ECO:0000269" key="2">
    <source>
    </source>
</evidence>
<evidence type="ECO:0000269" key="3">
    <source>
    </source>
</evidence>
<evidence type="ECO:0000305" key="4"/>
<keyword id="KW-0131">Cell cycle</keyword>
<keyword id="KW-0132">Cell division</keyword>
<keyword id="KW-0342">GTP-binding</keyword>
<keyword id="KW-0449">Lipoprotein</keyword>
<keyword id="KW-0472">Membrane</keyword>
<keyword id="KW-0488">Methylation</keyword>
<keyword id="KW-0547">Nucleotide-binding</keyword>
<keyword id="KW-0636">Prenylation</keyword>
<keyword id="KW-1185">Reference proteome</keyword>
<protein>
    <recommendedName>
        <fullName>GTP-binding protein rho4</fullName>
    </recommendedName>
</protein>
<name>RHO4_SCHPO</name>
<reference key="1">
    <citation type="journal article" date="2003" name="Eukaryot. Cell">
        <title>Novel Rho GTPase involved in cytokinesis and cell wall integrity in the fission yeast Schizosaccharomyces pombe.</title>
        <authorList>
            <person name="Santos B."/>
            <person name="Gutierrez J."/>
            <person name="Calonge T.M."/>
            <person name="Perez P."/>
        </authorList>
    </citation>
    <scope>NUCLEOTIDE SEQUENCE [GENOMIC DNA]</scope>
    <scope>FUNCTION</scope>
    <scope>SUBCELLULAR LOCATION</scope>
    <scope>MUTAGENESIS OF GLY-23 AND THR-28</scope>
</reference>
<reference key="2">
    <citation type="journal article" date="2003" name="Genes Cells">
        <title>The small GTPase Rho4 is involved in controlling cell morphology and septation in fission yeast.</title>
        <authorList>
            <person name="Nakano K."/>
            <person name="Mutoh T."/>
            <person name="Arai R."/>
            <person name="Mabuchi I."/>
        </authorList>
    </citation>
    <scope>NUCLEOTIDE SEQUENCE [GENOMIC DNA]</scope>
    <scope>FUNCTION</scope>
    <scope>SUBCELLULAR LOCATION</scope>
    <scope>MUTAGENESIS OF GLY-23 AND GLN-74</scope>
</reference>
<reference key="3">
    <citation type="journal article" date="2002" name="Nature">
        <title>The genome sequence of Schizosaccharomyces pombe.</title>
        <authorList>
            <person name="Wood V."/>
            <person name="Gwilliam R."/>
            <person name="Rajandream M.A."/>
            <person name="Lyne M.H."/>
            <person name="Lyne R."/>
            <person name="Stewart A."/>
            <person name="Sgouros J.G."/>
            <person name="Peat N."/>
            <person name="Hayles J."/>
            <person name="Baker S.G."/>
            <person name="Basham D."/>
            <person name="Bowman S."/>
            <person name="Brooks K."/>
            <person name="Brown D."/>
            <person name="Brown S."/>
            <person name="Chillingworth T."/>
            <person name="Churcher C.M."/>
            <person name="Collins M."/>
            <person name="Connor R."/>
            <person name="Cronin A."/>
            <person name="Davis P."/>
            <person name="Feltwell T."/>
            <person name="Fraser A."/>
            <person name="Gentles S."/>
            <person name="Goble A."/>
            <person name="Hamlin N."/>
            <person name="Harris D.E."/>
            <person name="Hidalgo J."/>
            <person name="Hodgson G."/>
            <person name="Holroyd S."/>
            <person name="Hornsby T."/>
            <person name="Howarth S."/>
            <person name="Huckle E.J."/>
            <person name="Hunt S."/>
            <person name="Jagels K."/>
            <person name="James K.D."/>
            <person name="Jones L."/>
            <person name="Jones M."/>
            <person name="Leather S."/>
            <person name="McDonald S."/>
            <person name="McLean J."/>
            <person name="Mooney P."/>
            <person name="Moule S."/>
            <person name="Mungall K.L."/>
            <person name="Murphy L.D."/>
            <person name="Niblett D."/>
            <person name="Odell C."/>
            <person name="Oliver K."/>
            <person name="O'Neil S."/>
            <person name="Pearson D."/>
            <person name="Quail M.A."/>
            <person name="Rabbinowitsch E."/>
            <person name="Rutherford K.M."/>
            <person name="Rutter S."/>
            <person name="Saunders D."/>
            <person name="Seeger K."/>
            <person name="Sharp S."/>
            <person name="Skelton J."/>
            <person name="Simmonds M.N."/>
            <person name="Squares R."/>
            <person name="Squares S."/>
            <person name="Stevens K."/>
            <person name="Taylor K."/>
            <person name="Taylor R.G."/>
            <person name="Tivey A."/>
            <person name="Walsh S.V."/>
            <person name="Warren T."/>
            <person name="Whitehead S."/>
            <person name="Woodward J.R."/>
            <person name="Volckaert G."/>
            <person name="Aert R."/>
            <person name="Robben J."/>
            <person name="Grymonprez B."/>
            <person name="Weltjens I."/>
            <person name="Vanstreels E."/>
            <person name="Rieger M."/>
            <person name="Schaefer M."/>
            <person name="Mueller-Auer S."/>
            <person name="Gabel C."/>
            <person name="Fuchs M."/>
            <person name="Duesterhoeft A."/>
            <person name="Fritzc C."/>
            <person name="Holzer E."/>
            <person name="Moestl D."/>
            <person name="Hilbert H."/>
            <person name="Borzym K."/>
            <person name="Langer I."/>
            <person name="Beck A."/>
            <person name="Lehrach H."/>
            <person name="Reinhardt R."/>
            <person name="Pohl T.M."/>
            <person name="Eger P."/>
            <person name="Zimmermann W."/>
            <person name="Wedler H."/>
            <person name="Wambutt R."/>
            <person name="Purnelle B."/>
            <person name="Goffeau A."/>
            <person name="Cadieu E."/>
            <person name="Dreano S."/>
            <person name="Gloux S."/>
            <person name="Lelaure V."/>
            <person name="Mottier S."/>
            <person name="Galibert F."/>
            <person name="Aves S.J."/>
            <person name="Xiang Z."/>
            <person name="Hunt C."/>
            <person name="Moore K."/>
            <person name="Hurst S.M."/>
            <person name="Lucas M."/>
            <person name="Rochet M."/>
            <person name="Gaillardin C."/>
            <person name="Tallada V.A."/>
            <person name="Garzon A."/>
            <person name="Thode G."/>
            <person name="Daga R.R."/>
            <person name="Cruzado L."/>
            <person name="Jimenez J."/>
            <person name="Sanchez M."/>
            <person name="del Rey F."/>
            <person name="Benito J."/>
            <person name="Dominguez A."/>
            <person name="Revuelta J.L."/>
            <person name="Moreno S."/>
            <person name="Armstrong J."/>
            <person name="Forsburg S.L."/>
            <person name="Cerutti L."/>
            <person name="Lowe T."/>
            <person name="McCombie W.R."/>
            <person name="Paulsen I."/>
            <person name="Potashkin J."/>
            <person name="Shpakovski G.V."/>
            <person name="Ussery D."/>
            <person name="Barrell B.G."/>
            <person name="Nurse P."/>
        </authorList>
    </citation>
    <scope>NUCLEOTIDE SEQUENCE [LARGE SCALE GENOMIC DNA]</scope>
    <source>
        <strain>972 / ATCC 24843</strain>
    </source>
</reference>
<gene>
    <name type="primary">rho4</name>
    <name type="ORF">SPAC16A10.04</name>
</gene>
<feature type="chain" id="PRO_0000198943" description="GTP-binding protein rho4">
    <location>
        <begin position="1"/>
        <end position="200"/>
    </location>
</feature>
<feature type="propeptide" id="PRO_0000281273" description="Removed in mature form" evidence="1">
    <location>
        <begin position="201"/>
        <end position="203"/>
    </location>
</feature>
<feature type="short sequence motif" description="Effector region" evidence="1">
    <location>
        <begin position="43"/>
        <end position="51"/>
    </location>
</feature>
<feature type="binding site" evidence="1">
    <location>
        <begin position="21"/>
        <end position="28"/>
    </location>
    <ligand>
        <name>GTP</name>
        <dbReference type="ChEBI" id="CHEBI:37565"/>
    </ligand>
</feature>
<feature type="binding site" evidence="1">
    <location>
        <begin position="70"/>
        <end position="74"/>
    </location>
    <ligand>
        <name>GTP</name>
        <dbReference type="ChEBI" id="CHEBI:37565"/>
    </ligand>
</feature>
<feature type="modified residue" description="Cysteine methyl ester" evidence="1">
    <location>
        <position position="200"/>
    </location>
</feature>
<feature type="lipid moiety-binding region" description="S-geranylgeranyl cysteine" evidence="1">
    <location>
        <position position="200"/>
    </location>
</feature>
<feature type="mutagenesis site" description="Cell lysis during separation." evidence="2 3">
    <original>G</original>
    <variation>V</variation>
    <location>
        <position position="23"/>
    </location>
</feature>
<feature type="mutagenesis site" description="No cell lysis." evidence="3">
    <original>T</original>
    <variation>N</variation>
    <location>
        <position position="28"/>
    </location>
</feature>
<feature type="mutagenesis site" description="Shrunken cells." evidence="2">
    <original>Q</original>
    <variation>L</variation>
    <location>
        <position position="74"/>
    </location>
</feature>
<proteinExistence type="evidence at protein level"/>
<comment type="function">
    <text evidence="2 3">Required for cell separation. Involved in the regulation of the septum degradation during cytokinesis and in the organization of F-actin patches and cytoplasmic microtubules.</text>
</comment>
<comment type="subcellular location">
    <subcellularLocation>
        <location evidence="2 3">Membrane</location>
    </subcellularLocation>
    <text>Membrane-bound. Associates with the septum during mitosis.</text>
</comment>
<comment type="similarity">
    <text evidence="4">Belongs to the small GTPase superfamily. Rho family.</text>
</comment>
<dbReference type="EMBL" id="CU329670">
    <property type="protein sequence ID" value="CAD86931.2"/>
    <property type="molecule type" value="Genomic_DNA"/>
</dbReference>
<dbReference type="RefSeq" id="NP_001018257.1">
    <property type="nucleotide sequence ID" value="NM_001019469.2"/>
</dbReference>
<dbReference type="SMR" id="Q874R1"/>
<dbReference type="BioGRID" id="280552">
    <property type="interactions" value="32"/>
</dbReference>
<dbReference type="FunCoup" id="Q874R1">
    <property type="interactions" value="466"/>
</dbReference>
<dbReference type="STRING" id="284812.Q874R1"/>
<dbReference type="PaxDb" id="4896-SPAC16A10.04.1"/>
<dbReference type="EnsemblFungi" id="SPAC16A10.04.1">
    <property type="protein sequence ID" value="SPAC16A10.04.1:pep"/>
    <property type="gene ID" value="SPAC16A10.04"/>
</dbReference>
<dbReference type="GeneID" id="3361476"/>
<dbReference type="KEGG" id="spo:3361476"/>
<dbReference type="PomBase" id="SPAC16A10.04">
    <property type="gene designation" value="rho4"/>
</dbReference>
<dbReference type="VEuPathDB" id="FungiDB:SPAC16A10.04"/>
<dbReference type="eggNOG" id="KOG0393">
    <property type="taxonomic scope" value="Eukaryota"/>
</dbReference>
<dbReference type="HOGENOM" id="CLU_041217_21_2_1"/>
<dbReference type="InParanoid" id="Q874R1"/>
<dbReference type="OMA" id="VHISLWD"/>
<dbReference type="PhylomeDB" id="Q874R1"/>
<dbReference type="Reactome" id="R-SPO-416482">
    <property type="pathway name" value="G alpha (12/13) signalling events"/>
</dbReference>
<dbReference type="Reactome" id="R-SPO-5625740">
    <property type="pathway name" value="RHO GTPases activate PKNs"/>
</dbReference>
<dbReference type="Reactome" id="R-SPO-6798695">
    <property type="pathway name" value="Neutrophil degranulation"/>
</dbReference>
<dbReference type="Reactome" id="R-SPO-9013026">
    <property type="pathway name" value="RHOB GTPase cycle"/>
</dbReference>
<dbReference type="Reactome" id="R-SPO-9013106">
    <property type="pathway name" value="RHOC GTPase cycle"/>
</dbReference>
<dbReference type="Reactome" id="R-SPO-9013405">
    <property type="pathway name" value="RHOD GTPase cycle"/>
</dbReference>
<dbReference type="Reactome" id="R-SPO-9035034">
    <property type="pathway name" value="RHOF GTPase cycle"/>
</dbReference>
<dbReference type="Reactome" id="R-SPO-9696264">
    <property type="pathway name" value="RND3 GTPase cycle"/>
</dbReference>
<dbReference type="Reactome" id="R-SPO-9696270">
    <property type="pathway name" value="RND2 GTPase cycle"/>
</dbReference>
<dbReference type="Reactome" id="R-SPO-9696273">
    <property type="pathway name" value="RND1 GTPase cycle"/>
</dbReference>
<dbReference type="PRO" id="PR:Q874R1"/>
<dbReference type="Proteomes" id="UP000002485">
    <property type="component" value="Chromosome I"/>
</dbReference>
<dbReference type="GO" id="GO:0005938">
    <property type="term" value="C:cell cortex"/>
    <property type="evidence" value="ECO:0000314"/>
    <property type="project" value="PomBase"/>
</dbReference>
<dbReference type="GO" id="GO:0032153">
    <property type="term" value="C:cell division site"/>
    <property type="evidence" value="ECO:0000269"/>
    <property type="project" value="PomBase"/>
</dbReference>
<dbReference type="GO" id="GO:0009898">
    <property type="term" value="C:cytoplasmic side of plasma membrane"/>
    <property type="evidence" value="ECO:0000303"/>
    <property type="project" value="PomBase"/>
</dbReference>
<dbReference type="GO" id="GO:0005829">
    <property type="term" value="C:cytosol"/>
    <property type="evidence" value="ECO:0000318"/>
    <property type="project" value="GO_Central"/>
</dbReference>
<dbReference type="GO" id="GO:0000935">
    <property type="term" value="C:division septum"/>
    <property type="evidence" value="ECO:0000314"/>
    <property type="project" value="PomBase"/>
</dbReference>
<dbReference type="GO" id="GO:0005886">
    <property type="term" value="C:plasma membrane"/>
    <property type="evidence" value="ECO:0000318"/>
    <property type="project" value="GO_Central"/>
</dbReference>
<dbReference type="GO" id="GO:0005525">
    <property type="term" value="F:GTP binding"/>
    <property type="evidence" value="ECO:0000318"/>
    <property type="project" value="GO_Central"/>
</dbReference>
<dbReference type="GO" id="GO:0003924">
    <property type="term" value="F:GTPase activity"/>
    <property type="evidence" value="ECO:0000314"/>
    <property type="project" value="PomBase"/>
</dbReference>
<dbReference type="GO" id="GO:0019901">
    <property type="term" value="F:protein kinase binding"/>
    <property type="evidence" value="ECO:0000318"/>
    <property type="project" value="GO_Central"/>
</dbReference>
<dbReference type="GO" id="GO:0007015">
    <property type="term" value="P:actin filament organization"/>
    <property type="evidence" value="ECO:0000318"/>
    <property type="project" value="GO_Central"/>
</dbReference>
<dbReference type="GO" id="GO:0000917">
    <property type="term" value="P:division septum assembly"/>
    <property type="evidence" value="ECO:0000315"/>
    <property type="project" value="PomBase"/>
</dbReference>
<dbReference type="GO" id="GO:0071852">
    <property type="term" value="P:fungal-type cell wall organization or biogenesis"/>
    <property type="evidence" value="ECO:0000304"/>
    <property type="project" value="PomBase"/>
</dbReference>
<dbReference type="GO" id="GO:2001043">
    <property type="term" value="P:positive regulation of septum digestion after cytokinesis"/>
    <property type="evidence" value="ECO:0000269"/>
    <property type="project" value="PomBase"/>
</dbReference>
<dbReference type="GO" id="GO:0030994">
    <property type="term" value="P:primary cell septum disassembly"/>
    <property type="evidence" value="ECO:0000304"/>
    <property type="project" value="PomBase"/>
</dbReference>
<dbReference type="GO" id="GO:0032956">
    <property type="term" value="P:regulation of actin cytoskeleton organization"/>
    <property type="evidence" value="ECO:0000318"/>
    <property type="project" value="GO_Central"/>
</dbReference>
<dbReference type="GO" id="GO:0007165">
    <property type="term" value="P:signal transduction"/>
    <property type="evidence" value="ECO:0000318"/>
    <property type="project" value="GO_Central"/>
</dbReference>
<dbReference type="GO" id="GO:0007264">
    <property type="term" value="P:small GTPase-mediated signal transduction"/>
    <property type="evidence" value="ECO:0007669"/>
    <property type="project" value="InterPro"/>
</dbReference>
<dbReference type="CDD" id="cd04132">
    <property type="entry name" value="Rho4_like"/>
    <property type="match status" value="1"/>
</dbReference>
<dbReference type="FunFam" id="3.40.50.300:FF:000678">
    <property type="entry name" value="Rho GTPase Rho4"/>
    <property type="match status" value="1"/>
</dbReference>
<dbReference type="Gene3D" id="3.40.50.300">
    <property type="entry name" value="P-loop containing nucleotide triphosphate hydrolases"/>
    <property type="match status" value="1"/>
</dbReference>
<dbReference type="InterPro" id="IPR027417">
    <property type="entry name" value="P-loop_NTPase"/>
</dbReference>
<dbReference type="InterPro" id="IPR005225">
    <property type="entry name" value="Small_GTP-bd"/>
</dbReference>
<dbReference type="InterPro" id="IPR001806">
    <property type="entry name" value="Small_GTPase"/>
</dbReference>
<dbReference type="InterPro" id="IPR003578">
    <property type="entry name" value="Small_GTPase_Rho"/>
</dbReference>
<dbReference type="NCBIfam" id="TIGR00231">
    <property type="entry name" value="small_GTP"/>
    <property type="match status" value="1"/>
</dbReference>
<dbReference type="PANTHER" id="PTHR24072">
    <property type="entry name" value="RHO FAMILY GTPASE"/>
    <property type="match status" value="1"/>
</dbReference>
<dbReference type="Pfam" id="PF00071">
    <property type="entry name" value="Ras"/>
    <property type="match status" value="1"/>
</dbReference>
<dbReference type="PRINTS" id="PR00449">
    <property type="entry name" value="RASTRNSFRMNG"/>
</dbReference>
<dbReference type="SMART" id="SM00175">
    <property type="entry name" value="RAB"/>
    <property type="match status" value="1"/>
</dbReference>
<dbReference type="SMART" id="SM00173">
    <property type="entry name" value="RAS"/>
    <property type="match status" value="1"/>
</dbReference>
<dbReference type="SMART" id="SM00174">
    <property type="entry name" value="RHO"/>
    <property type="match status" value="1"/>
</dbReference>
<dbReference type="SUPFAM" id="SSF52540">
    <property type="entry name" value="P-loop containing nucleoside triphosphate hydrolases"/>
    <property type="match status" value="1"/>
</dbReference>
<dbReference type="PROSITE" id="PS51420">
    <property type="entry name" value="RHO"/>
    <property type="match status" value="1"/>
</dbReference>
<organism>
    <name type="scientific">Schizosaccharomyces pombe (strain 972 / ATCC 24843)</name>
    <name type="common">Fission yeast</name>
    <dbReference type="NCBI Taxonomy" id="284812"/>
    <lineage>
        <taxon>Eukaryota</taxon>
        <taxon>Fungi</taxon>
        <taxon>Dikarya</taxon>
        <taxon>Ascomycota</taxon>
        <taxon>Taphrinomycotina</taxon>
        <taxon>Schizosaccharomycetes</taxon>
        <taxon>Schizosaccharomycetales</taxon>
        <taxon>Schizosaccharomycetaceae</taxon>
        <taxon>Schizosaccharomyces</taxon>
    </lineage>
</organism>